<comment type="function">
    <text evidence="1">Digests double-stranded RNA. Involved in the processing of primary rRNA transcript to yield the immediate precursors to the large and small rRNAs (23S and 16S). Processes some mRNAs, and tRNAs when they are encoded in the rRNA operon. Processes pre-crRNA and tracrRNA of type II CRISPR loci if present in the organism.</text>
</comment>
<comment type="catalytic activity">
    <reaction evidence="1">
        <text>Endonucleolytic cleavage to 5'-phosphomonoester.</text>
        <dbReference type="EC" id="3.1.26.3"/>
    </reaction>
</comment>
<comment type="cofactor">
    <cofactor evidence="1">
        <name>Mg(2+)</name>
        <dbReference type="ChEBI" id="CHEBI:18420"/>
    </cofactor>
</comment>
<comment type="subunit">
    <text evidence="1">Homodimer.</text>
</comment>
<comment type="subcellular location">
    <subcellularLocation>
        <location evidence="1">Cytoplasm</location>
    </subcellularLocation>
</comment>
<comment type="similarity">
    <text evidence="1">Belongs to the ribonuclease III family.</text>
</comment>
<gene>
    <name evidence="1" type="primary">rnc</name>
    <name type="ordered locus">CTC_01243</name>
</gene>
<sequence length="235" mass="27387">MNKYMDLKDLQNKIEIKFENIKLLHIALTHSSYANEKKRIQYNERLEFLGDSVLQLVITEYLFMNYKDKSEGELSKKRALIVCENSLFSIAKNLELGEYIKMSKGEELTGGRERISILADAVEALIASIYLDKGIDVVREFILKNFYNIVEKAMKDEIILDYKTKLQEIIQKDGDIQINYILIKHEGPPHRRKFYTEVKIKDNVLGYGIGYSKKESEQNAAKKAIENMEVNKEYE</sequence>
<proteinExistence type="inferred from homology"/>
<keyword id="KW-0963">Cytoplasm</keyword>
<keyword id="KW-0255">Endonuclease</keyword>
<keyword id="KW-0378">Hydrolase</keyword>
<keyword id="KW-0460">Magnesium</keyword>
<keyword id="KW-0479">Metal-binding</keyword>
<keyword id="KW-0507">mRNA processing</keyword>
<keyword id="KW-0540">Nuclease</keyword>
<keyword id="KW-1185">Reference proteome</keyword>
<keyword id="KW-0694">RNA-binding</keyword>
<keyword id="KW-0698">rRNA processing</keyword>
<keyword id="KW-0699">rRNA-binding</keyword>
<keyword id="KW-0819">tRNA processing</keyword>
<evidence type="ECO:0000255" key="1">
    <source>
        <dbReference type="HAMAP-Rule" id="MF_00104"/>
    </source>
</evidence>
<name>RNC_CLOTE</name>
<feature type="chain" id="PRO_0000180392" description="Ribonuclease 3">
    <location>
        <begin position="1"/>
        <end position="235"/>
    </location>
</feature>
<feature type="domain" description="RNase III" evidence="1">
    <location>
        <begin position="7"/>
        <end position="134"/>
    </location>
</feature>
<feature type="domain" description="DRBM" evidence="1">
    <location>
        <begin position="161"/>
        <end position="230"/>
    </location>
</feature>
<feature type="active site" evidence="1">
    <location>
        <position position="51"/>
    </location>
</feature>
<feature type="active site" evidence="1">
    <location>
        <position position="123"/>
    </location>
</feature>
<feature type="binding site" evidence="1">
    <location>
        <position position="47"/>
    </location>
    <ligand>
        <name>Mg(2+)</name>
        <dbReference type="ChEBI" id="CHEBI:18420"/>
    </ligand>
</feature>
<feature type="binding site" evidence="1">
    <location>
        <position position="120"/>
    </location>
    <ligand>
        <name>Mg(2+)</name>
        <dbReference type="ChEBI" id="CHEBI:18420"/>
    </ligand>
</feature>
<feature type="binding site" evidence="1">
    <location>
        <position position="123"/>
    </location>
    <ligand>
        <name>Mg(2+)</name>
        <dbReference type="ChEBI" id="CHEBI:18420"/>
    </ligand>
</feature>
<organism>
    <name type="scientific">Clostridium tetani (strain Massachusetts / E88)</name>
    <dbReference type="NCBI Taxonomy" id="212717"/>
    <lineage>
        <taxon>Bacteria</taxon>
        <taxon>Bacillati</taxon>
        <taxon>Bacillota</taxon>
        <taxon>Clostridia</taxon>
        <taxon>Eubacteriales</taxon>
        <taxon>Clostridiaceae</taxon>
        <taxon>Clostridium</taxon>
    </lineage>
</organism>
<reference key="1">
    <citation type="journal article" date="2003" name="Proc. Natl. Acad. Sci. U.S.A.">
        <title>The genome sequence of Clostridium tetani, the causative agent of tetanus disease.</title>
        <authorList>
            <person name="Brueggemann H."/>
            <person name="Baeumer S."/>
            <person name="Fricke W.F."/>
            <person name="Wiezer A."/>
            <person name="Liesegang H."/>
            <person name="Decker I."/>
            <person name="Herzberg C."/>
            <person name="Martinez-Arias R."/>
            <person name="Merkl R."/>
            <person name="Henne A."/>
            <person name="Gottschalk G."/>
        </authorList>
    </citation>
    <scope>NUCLEOTIDE SEQUENCE [LARGE SCALE GENOMIC DNA]</scope>
    <source>
        <strain>Massachusetts / E88</strain>
    </source>
</reference>
<accession>Q895M9</accession>
<protein>
    <recommendedName>
        <fullName evidence="1">Ribonuclease 3</fullName>
        <ecNumber evidence="1">3.1.26.3</ecNumber>
    </recommendedName>
    <alternativeName>
        <fullName evidence="1">Ribonuclease III</fullName>
        <shortName evidence="1">RNase III</shortName>
    </alternativeName>
</protein>
<dbReference type="EC" id="3.1.26.3" evidence="1"/>
<dbReference type="EMBL" id="AE015927">
    <property type="protein sequence ID" value="AAO35811.1"/>
    <property type="molecule type" value="Genomic_DNA"/>
</dbReference>
<dbReference type="RefSeq" id="WP_011099473.1">
    <property type="nucleotide sequence ID" value="NC_004557.1"/>
</dbReference>
<dbReference type="SMR" id="Q895M9"/>
<dbReference type="STRING" id="212717.CTC_01243"/>
<dbReference type="GeneID" id="24254049"/>
<dbReference type="KEGG" id="ctc:CTC_01243"/>
<dbReference type="HOGENOM" id="CLU_000907_1_3_9"/>
<dbReference type="OrthoDB" id="9805026at2"/>
<dbReference type="Proteomes" id="UP000001412">
    <property type="component" value="Chromosome"/>
</dbReference>
<dbReference type="GO" id="GO:0005737">
    <property type="term" value="C:cytoplasm"/>
    <property type="evidence" value="ECO:0007669"/>
    <property type="project" value="UniProtKB-SubCell"/>
</dbReference>
<dbReference type="GO" id="GO:0003725">
    <property type="term" value="F:double-stranded RNA binding"/>
    <property type="evidence" value="ECO:0007669"/>
    <property type="project" value="TreeGrafter"/>
</dbReference>
<dbReference type="GO" id="GO:0046872">
    <property type="term" value="F:metal ion binding"/>
    <property type="evidence" value="ECO:0007669"/>
    <property type="project" value="UniProtKB-KW"/>
</dbReference>
<dbReference type="GO" id="GO:0004525">
    <property type="term" value="F:ribonuclease III activity"/>
    <property type="evidence" value="ECO:0007669"/>
    <property type="project" value="UniProtKB-UniRule"/>
</dbReference>
<dbReference type="GO" id="GO:0019843">
    <property type="term" value="F:rRNA binding"/>
    <property type="evidence" value="ECO:0007669"/>
    <property type="project" value="UniProtKB-KW"/>
</dbReference>
<dbReference type="GO" id="GO:0006397">
    <property type="term" value="P:mRNA processing"/>
    <property type="evidence" value="ECO:0007669"/>
    <property type="project" value="UniProtKB-UniRule"/>
</dbReference>
<dbReference type="GO" id="GO:0010468">
    <property type="term" value="P:regulation of gene expression"/>
    <property type="evidence" value="ECO:0007669"/>
    <property type="project" value="TreeGrafter"/>
</dbReference>
<dbReference type="GO" id="GO:0006364">
    <property type="term" value="P:rRNA processing"/>
    <property type="evidence" value="ECO:0007669"/>
    <property type="project" value="UniProtKB-UniRule"/>
</dbReference>
<dbReference type="GO" id="GO:0008033">
    <property type="term" value="P:tRNA processing"/>
    <property type="evidence" value="ECO:0007669"/>
    <property type="project" value="UniProtKB-KW"/>
</dbReference>
<dbReference type="CDD" id="cd10845">
    <property type="entry name" value="DSRM_RNAse_III_family"/>
    <property type="match status" value="1"/>
</dbReference>
<dbReference type="CDD" id="cd00593">
    <property type="entry name" value="RIBOc"/>
    <property type="match status" value="1"/>
</dbReference>
<dbReference type="FunFam" id="1.10.1520.10:FF:000001">
    <property type="entry name" value="Ribonuclease 3"/>
    <property type="match status" value="1"/>
</dbReference>
<dbReference type="FunFam" id="3.30.160.20:FF:000003">
    <property type="entry name" value="Ribonuclease 3"/>
    <property type="match status" value="1"/>
</dbReference>
<dbReference type="Gene3D" id="3.30.160.20">
    <property type="match status" value="1"/>
</dbReference>
<dbReference type="Gene3D" id="1.10.1520.10">
    <property type="entry name" value="Ribonuclease III domain"/>
    <property type="match status" value="1"/>
</dbReference>
<dbReference type="HAMAP" id="MF_00104">
    <property type="entry name" value="RNase_III"/>
    <property type="match status" value="1"/>
</dbReference>
<dbReference type="InterPro" id="IPR014720">
    <property type="entry name" value="dsRBD_dom"/>
</dbReference>
<dbReference type="InterPro" id="IPR011907">
    <property type="entry name" value="RNase_III"/>
</dbReference>
<dbReference type="InterPro" id="IPR000999">
    <property type="entry name" value="RNase_III_dom"/>
</dbReference>
<dbReference type="InterPro" id="IPR036389">
    <property type="entry name" value="RNase_III_sf"/>
</dbReference>
<dbReference type="NCBIfam" id="TIGR02191">
    <property type="entry name" value="RNaseIII"/>
    <property type="match status" value="1"/>
</dbReference>
<dbReference type="PANTHER" id="PTHR11207:SF0">
    <property type="entry name" value="RIBONUCLEASE 3"/>
    <property type="match status" value="1"/>
</dbReference>
<dbReference type="PANTHER" id="PTHR11207">
    <property type="entry name" value="RIBONUCLEASE III"/>
    <property type="match status" value="1"/>
</dbReference>
<dbReference type="Pfam" id="PF00035">
    <property type="entry name" value="dsrm"/>
    <property type="match status" value="1"/>
</dbReference>
<dbReference type="Pfam" id="PF14622">
    <property type="entry name" value="Ribonucleas_3_3"/>
    <property type="match status" value="1"/>
</dbReference>
<dbReference type="SMART" id="SM00358">
    <property type="entry name" value="DSRM"/>
    <property type="match status" value="1"/>
</dbReference>
<dbReference type="SMART" id="SM00535">
    <property type="entry name" value="RIBOc"/>
    <property type="match status" value="1"/>
</dbReference>
<dbReference type="SUPFAM" id="SSF54768">
    <property type="entry name" value="dsRNA-binding domain-like"/>
    <property type="match status" value="1"/>
</dbReference>
<dbReference type="SUPFAM" id="SSF69065">
    <property type="entry name" value="RNase III domain-like"/>
    <property type="match status" value="1"/>
</dbReference>
<dbReference type="PROSITE" id="PS50137">
    <property type="entry name" value="DS_RBD"/>
    <property type="match status" value="1"/>
</dbReference>
<dbReference type="PROSITE" id="PS00517">
    <property type="entry name" value="RNASE_3_1"/>
    <property type="match status" value="1"/>
</dbReference>
<dbReference type="PROSITE" id="PS50142">
    <property type="entry name" value="RNASE_3_2"/>
    <property type="match status" value="1"/>
</dbReference>